<name>GP152_MOUSE</name>
<proteinExistence type="evidence at transcript level"/>
<accession>Q8BXS7</accession>
<accession>Q499X3</accession>
<dbReference type="EMBL" id="AK044366">
    <property type="protein sequence ID" value="BAC31886.1"/>
    <property type="molecule type" value="mRNA"/>
</dbReference>
<dbReference type="EMBL" id="BC099681">
    <property type="protein sequence ID" value="AAH99681.1"/>
    <property type="molecule type" value="mRNA"/>
</dbReference>
<dbReference type="CCDS" id="CCDS29417.1"/>
<dbReference type="RefSeq" id="NP_996856.1">
    <property type="nucleotide sequence ID" value="NM_206973.2"/>
</dbReference>
<dbReference type="SMR" id="Q8BXS7"/>
<dbReference type="FunCoup" id="Q8BXS7">
    <property type="interactions" value="95"/>
</dbReference>
<dbReference type="STRING" id="10090.ENSMUSP00000094062"/>
<dbReference type="GlyGen" id="Q8BXS7">
    <property type="glycosylation" value="3 sites"/>
</dbReference>
<dbReference type="iPTMnet" id="Q8BXS7"/>
<dbReference type="PhosphoSitePlus" id="Q8BXS7"/>
<dbReference type="PaxDb" id="10090-ENSMUSP00000094062"/>
<dbReference type="Antibodypedia" id="16520">
    <property type="antibodies" value="156 antibodies from 28 providers"/>
</dbReference>
<dbReference type="DNASU" id="269053"/>
<dbReference type="Ensembl" id="ENSMUST00000096338.5">
    <property type="protein sequence ID" value="ENSMUSP00000094062.4"/>
    <property type="gene ID" value="ENSMUSG00000044724.10"/>
</dbReference>
<dbReference type="GeneID" id="269053"/>
<dbReference type="KEGG" id="mmu:269053"/>
<dbReference type="UCSC" id="uc008fyx.1">
    <property type="organism name" value="mouse"/>
</dbReference>
<dbReference type="AGR" id="MGI:2685519"/>
<dbReference type="CTD" id="390212"/>
<dbReference type="MGI" id="MGI:2685519">
    <property type="gene designation" value="Gpr152"/>
</dbReference>
<dbReference type="VEuPathDB" id="HostDB:ENSMUSG00000044724"/>
<dbReference type="eggNOG" id="ENOG502SP7R">
    <property type="taxonomic scope" value="Eukaryota"/>
</dbReference>
<dbReference type="GeneTree" id="ENSGT01030000234639"/>
<dbReference type="HOGENOM" id="CLU_587370_0_0_1"/>
<dbReference type="InParanoid" id="Q8BXS7"/>
<dbReference type="OMA" id="SPFLCLM"/>
<dbReference type="OrthoDB" id="9449262at2759"/>
<dbReference type="PhylomeDB" id="Q8BXS7"/>
<dbReference type="TreeFam" id="TF338313"/>
<dbReference type="BioGRID-ORCS" id="269053">
    <property type="hits" value="2 hits in 76 CRISPR screens"/>
</dbReference>
<dbReference type="ChiTaRS" id="Gpr152">
    <property type="organism name" value="mouse"/>
</dbReference>
<dbReference type="PRO" id="PR:Q8BXS7"/>
<dbReference type="Proteomes" id="UP000000589">
    <property type="component" value="Chromosome 19"/>
</dbReference>
<dbReference type="RNAct" id="Q8BXS7">
    <property type="molecule type" value="protein"/>
</dbReference>
<dbReference type="Bgee" id="ENSMUSG00000044724">
    <property type="expression patterns" value="Expressed in retinal neural layer and 2 other cell types or tissues"/>
</dbReference>
<dbReference type="GO" id="GO:0005886">
    <property type="term" value="C:plasma membrane"/>
    <property type="evidence" value="ECO:0007669"/>
    <property type="project" value="UniProtKB-SubCell"/>
</dbReference>
<dbReference type="GO" id="GO:0004930">
    <property type="term" value="F:G protein-coupled receptor activity"/>
    <property type="evidence" value="ECO:0007669"/>
    <property type="project" value="UniProtKB-KW"/>
</dbReference>
<dbReference type="GO" id="GO:0042802">
    <property type="term" value="F:identical protein binding"/>
    <property type="evidence" value="ECO:0007669"/>
    <property type="project" value="Ensembl"/>
</dbReference>
<dbReference type="FunFam" id="1.20.1070.10:FF:000226">
    <property type="entry name" value="Probable G-protein coupled receptor 152"/>
    <property type="match status" value="1"/>
</dbReference>
<dbReference type="Gene3D" id="1.20.1070.10">
    <property type="entry name" value="Rhodopsin 7-helix transmembrane proteins"/>
    <property type="match status" value="1"/>
</dbReference>
<dbReference type="InterPro" id="IPR000276">
    <property type="entry name" value="GPCR_Rhodpsn"/>
</dbReference>
<dbReference type="InterPro" id="IPR017452">
    <property type="entry name" value="GPCR_Rhodpsn_7TM"/>
</dbReference>
<dbReference type="InterPro" id="IPR026234">
    <property type="entry name" value="MRGPCRFAMILY"/>
</dbReference>
<dbReference type="PANTHER" id="PTHR11334:SF1">
    <property type="entry name" value="G-PROTEIN COUPLED RECEPTOR 152-RELATED"/>
    <property type="match status" value="1"/>
</dbReference>
<dbReference type="PANTHER" id="PTHR11334">
    <property type="entry name" value="MAS-RELATED G-PROTEIN COUPLED RECEPTOR"/>
    <property type="match status" value="1"/>
</dbReference>
<dbReference type="Pfam" id="PF00001">
    <property type="entry name" value="7tm_1"/>
    <property type="match status" value="1"/>
</dbReference>
<dbReference type="PRINTS" id="PR00237">
    <property type="entry name" value="GPCRRHODOPSN"/>
</dbReference>
<dbReference type="SUPFAM" id="SSF81321">
    <property type="entry name" value="Family A G protein-coupled receptor-like"/>
    <property type="match status" value="1"/>
</dbReference>
<dbReference type="PROSITE" id="PS50262">
    <property type="entry name" value="G_PROTEIN_RECEP_F1_2"/>
    <property type="match status" value="1"/>
</dbReference>
<reference key="1">
    <citation type="journal article" date="2005" name="Science">
        <title>The transcriptional landscape of the mammalian genome.</title>
        <authorList>
            <person name="Carninci P."/>
            <person name="Kasukawa T."/>
            <person name="Katayama S."/>
            <person name="Gough J."/>
            <person name="Frith M.C."/>
            <person name="Maeda N."/>
            <person name="Oyama R."/>
            <person name="Ravasi T."/>
            <person name="Lenhard B."/>
            <person name="Wells C."/>
            <person name="Kodzius R."/>
            <person name="Shimokawa K."/>
            <person name="Bajic V.B."/>
            <person name="Brenner S.E."/>
            <person name="Batalov S."/>
            <person name="Forrest A.R."/>
            <person name="Zavolan M."/>
            <person name="Davis M.J."/>
            <person name="Wilming L.G."/>
            <person name="Aidinis V."/>
            <person name="Allen J.E."/>
            <person name="Ambesi-Impiombato A."/>
            <person name="Apweiler R."/>
            <person name="Aturaliya R.N."/>
            <person name="Bailey T.L."/>
            <person name="Bansal M."/>
            <person name="Baxter L."/>
            <person name="Beisel K.W."/>
            <person name="Bersano T."/>
            <person name="Bono H."/>
            <person name="Chalk A.M."/>
            <person name="Chiu K.P."/>
            <person name="Choudhary V."/>
            <person name="Christoffels A."/>
            <person name="Clutterbuck D.R."/>
            <person name="Crowe M.L."/>
            <person name="Dalla E."/>
            <person name="Dalrymple B.P."/>
            <person name="de Bono B."/>
            <person name="Della Gatta G."/>
            <person name="di Bernardo D."/>
            <person name="Down T."/>
            <person name="Engstrom P."/>
            <person name="Fagiolini M."/>
            <person name="Faulkner G."/>
            <person name="Fletcher C.F."/>
            <person name="Fukushima T."/>
            <person name="Furuno M."/>
            <person name="Futaki S."/>
            <person name="Gariboldi M."/>
            <person name="Georgii-Hemming P."/>
            <person name="Gingeras T.R."/>
            <person name="Gojobori T."/>
            <person name="Green R.E."/>
            <person name="Gustincich S."/>
            <person name="Harbers M."/>
            <person name="Hayashi Y."/>
            <person name="Hensch T.K."/>
            <person name="Hirokawa N."/>
            <person name="Hill D."/>
            <person name="Huminiecki L."/>
            <person name="Iacono M."/>
            <person name="Ikeo K."/>
            <person name="Iwama A."/>
            <person name="Ishikawa T."/>
            <person name="Jakt M."/>
            <person name="Kanapin A."/>
            <person name="Katoh M."/>
            <person name="Kawasawa Y."/>
            <person name="Kelso J."/>
            <person name="Kitamura H."/>
            <person name="Kitano H."/>
            <person name="Kollias G."/>
            <person name="Krishnan S.P."/>
            <person name="Kruger A."/>
            <person name="Kummerfeld S.K."/>
            <person name="Kurochkin I.V."/>
            <person name="Lareau L.F."/>
            <person name="Lazarevic D."/>
            <person name="Lipovich L."/>
            <person name="Liu J."/>
            <person name="Liuni S."/>
            <person name="McWilliam S."/>
            <person name="Madan Babu M."/>
            <person name="Madera M."/>
            <person name="Marchionni L."/>
            <person name="Matsuda H."/>
            <person name="Matsuzawa S."/>
            <person name="Miki H."/>
            <person name="Mignone F."/>
            <person name="Miyake S."/>
            <person name="Morris K."/>
            <person name="Mottagui-Tabar S."/>
            <person name="Mulder N."/>
            <person name="Nakano N."/>
            <person name="Nakauchi H."/>
            <person name="Ng P."/>
            <person name="Nilsson R."/>
            <person name="Nishiguchi S."/>
            <person name="Nishikawa S."/>
            <person name="Nori F."/>
            <person name="Ohara O."/>
            <person name="Okazaki Y."/>
            <person name="Orlando V."/>
            <person name="Pang K.C."/>
            <person name="Pavan W.J."/>
            <person name="Pavesi G."/>
            <person name="Pesole G."/>
            <person name="Petrovsky N."/>
            <person name="Piazza S."/>
            <person name="Reed J."/>
            <person name="Reid J.F."/>
            <person name="Ring B.Z."/>
            <person name="Ringwald M."/>
            <person name="Rost B."/>
            <person name="Ruan Y."/>
            <person name="Salzberg S.L."/>
            <person name="Sandelin A."/>
            <person name="Schneider C."/>
            <person name="Schoenbach C."/>
            <person name="Sekiguchi K."/>
            <person name="Semple C.A."/>
            <person name="Seno S."/>
            <person name="Sessa L."/>
            <person name="Sheng Y."/>
            <person name="Shibata Y."/>
            <person name="Shimada H."/>
            <person name="Shimada K."/>
            <person name="Silva D."/>
            <person name="Sinclair B."/>
            <person name="Sperling S."/>
            <person name="Stupka E."/>
            <person name="Sugiura K."/>
            <person name="Sultana R."/>
            <person name="Takenaka Y."/>
            <person name="Taki K."/>
            <person name="Tammoja K."/>
            <person name="Tan S.L."/>
            <person name="Tang S."/>
            <person name="Taylor M.S."/>
            <person name="Tegner J."/>
            <person name="Teichmann S.A."/>
            <person name="Ueda H.R."/>
            <person name="van Nimwegen E."/>
            <person name="Verardo R."/>
            <person name="Wei C.L."/>
            <person name="Yagi K."/>
            <person name="Yamanishi H."/>
            <person name="Zabarovsky E."/>
            <person name="Zhu S."/>
            <person name="Zimmer A."/>
            <person name="Hide W."/>
            <person name="Bult C."/>
            <person name="Grimmond S.M."/>
            <person name="Teasdale R.D."/>
            <person name="Liu E.T."/>
            <person name="Brusic V."/>
            <person name="Quackenbush J."/>
            <person name="Wahlestedt C."/>
            <person name="Mattick J.S."/>
            <person name="Hume D.A."/>
            <person name="Kai C."/>
            <person name="Sasaki D."/>
            <person name="Tomaru Y."/>
            <person name="Fukuda S."/>
            <person name="Kanamori-Katayama M."/>
            <person name="Suzuki M."/>
            <person name="Aoki J."/>
            <person name="Arakawa T."/>
            <person name="Iida J."/>
            <person name="Imamura K."/>
            <person name="Itoh M."/>
            <person name="Kato T."/>
            <person name="Kawaji H."/>
            <person name="Kawagashira N."/>
            <person name="Kawashima T."/>
            <person name="Kojima M."/>
            <person name="Kondo S."/>
            <person name="Konno H."/>
            <person name="Nakano K."/>
            <person name="Ninomiya N."/>
            <person name="Nishio T."/>
            <person name="Okada M."/>
            <person name="Plessy C."/>
            <person name="Shibata K."/>
            <person name="Shiraki T."/>
            <person name="Suzuki S."/>
            <person name="Tagami M."/>
            <person name="Waki K."/>
            <person name="Watahiki A."/>
            <person name="Okamura-Oho Y."/>
            <person name="Suzuki H."/>
            <person name="Kawai J."/>
            <person name="Hayashizaki Y."/>
        </authorList>
    </citation>
    <scope>NUCLEOTIDE SEQUENCE [LARGE SCALE MRNA]</scope>
    <source>
        <strain>C57BL/6J</strain>
        <tissue>Retina</tissue>
    </source>
</reference>
<reference key="2">
    <citation type="journal article" date="2004" name="Genome Res.">
        <title>The status, quality, and expansion of the NIH full-length cDNA project: the Mammalian Gene Collection (MGC).</title>
        <authorList>
            <consortium name="The MGC Project Team"/>
        </authorList>
    </citation>
    <scope>NUCLEOTIDE SEQUENCE [LARGE SCALE MRNA]</scope>
    <source>
        <tissue>Eye</tissue>
    </source>
</reference>
<protein>
    <recommendedName>
        <fullName>Probable G-protein coupled receptor 152</fullName>
    </recommendedName>
</protein>
<evidence type="ECO:0000255" key="1"/>
<evidence type="ECO:0000255" key="2">
    <source>
        <dbReference type="PROSITE-ProRule" id="PRU00521"/>
    </source>
</evidence>
<evidence type="ECO:0000256" key="3">
    <source>
        <dbReference type="SAM" id="MobiDB-lite"/>
    </source>
</evidence>
<gene>
    <name type="primary">Gpr152</name>
</gene>
<keyword id="KW-1003">Cell membrane</keyword>
<keyword id="KW-1015">Disulfide bond</keyword>
<keyword id="KW-0297">G-protein coupled receptor</keyword>
<keyword id="KW-0472">Membrane</keyword>
<keyword id="KW-0675">Receptor</keyword>
<keyword id="KW-1185">Reference proteome</keyword>
<keyword id="KW-0807">Transducer</keyword>
<keyword id="KW-0812">Transmembrane</keyword>
<keyword id="KW-1133">Transmembrane helix</keyword>
<comment type="function">
    <text>Orphan receptor.</text>
</comment>
<comment type="subcellular location">
    <subcellularLocation>
        <location>Cell membrane</location>
        <topology>Multi-pass membrane protein</topology>
    </subcellularLocation>
</comment>
<comment type="similarity">
    <text evidence="2">Belongs to the G-protein coupled receptor 1 family.</text>
</comment>
<organism>
    <name type="scientific">Mus musculus</name>
    <name type="common">Mouse</name>
    <dbReference type="NCBI Taxonomy" id="10090"/>
    <lineage>
        <taxon>Eukaryota</taxon>
        <taxon>Metazoa</taxon>
        <taxon>Chordata</taxon>
        <taxon>Craniata</taxon>
        <taxon>Vertebrata</taxon>
        <taxon>Euteleostomi</taxon>
        <taxon>Mammalia</taxon>
        <taxon>Eutheria</taxon>
        <taxon>Euarchontoglires</taxon>
        <taxon>Glires</taxon>
        <taxon>Rodentia</taxon>
        <taxon>Myomorpha</taxon>
        <taxon>Muroidea</taxon>
        <taxon>Muridae</taxon>
        <taxon>Murinae</taxon>
        <taxon>Mus</taxon>
        <taxon>Mus</taxon>
    </lineage>
</organism>
<sequence>MDTAVEANLGAAGHGPRTELSDEDYYPQGSWDTVFLVALLLLGLPANGLMAWLAGSQARHGAGTRLALLLLSLALSDFLFLAAATFQILEIQHGGHWPLGTAACRFYYFLWGVSYSSGLFLLTALSLDRCLLALCPRWYPGHRPARLPLWVCAGVWVLATLFSVPWLVFPEAAVWWYDLVICLDFWDTEELPLRMLEILGGFLPFLLLLVCHVLTQATACRTCCGHQPRRMACHGFARVAKTILSAYVVLRLPYQLAQLLYLAFLWDVYPGYLLWEALVYSDYLILLNSCLSPFLCLAASADLRALLRTVLSSFAAAVCEERPGSFIPAEPQTLPGPTSEGQSRLDSVVQPQVNPSVQLQSDSVVQPEVSPSAQPQSDSVAQPTVGSLIQPPLDTVVQLEVNPLTQPQLDPMAQPQVNPSAQPQSKSVVQPQVDPLTQPQLDPVAQPQSNTETPIPAFGDESASNPGEENSSGPCPDPTPGTPENLDRPAVPQEKSPSNVPPEEAPSAGPT</sequence>
<feature type="chain" id="PRO_0000069636" description="Probable G-protein coupled receptor 152">
    <location>
        <begin position="1"/>
        <end position="511"/>
    </location>
</feature>
<feature type="topological domain" description="Extracellular" evidence="1">
    <location>
        <begin position="1"/>
        <end position="33"/>
    </location>
</feature>
<feature type="transmembrane region" description="Helical; Name=1" evidence="1">
    <location>
        <begin position="34"/>
        <end position="54"/>
    </location>
</feature>
<feature type="topological domain" description="Cytoplasmic" evidence="1">
    <location>
        <begin position="55"/>
        <end position="65"/>
    </location>
</feature>
<feature type="transmembrane region" description="Helical; Name=2" evidence="1">
    <location>
        <begin position="66"/>
        <end position="86"/>
    </location>
</feature>
<feature type="topological domain" description="Extracellular" evidence="1">
    <location>
        <begin position="87"/>
        <end position="105"/>
    </location>
</feature>
<feature type="transmembrane region" description="Helical; Name=3" evidence="1">
    <location>
        <begin position="106"/>
        <end position="126"/>
    </location>
</feature>
<feature type="topological domain" description="Cytoplasmic" evidence="1">
    <location>
        <begin position="127"/>
        <end position="148"/>
    </location>
</feature>
<feature type="transmembrane region" description="Helical; Name=4" evidence="1">
    <location>
        <begin position="149"/>
        <end position="169"/>
    </location>
</feature>
<feature type="topological domain" description="Extracellular" evidence="1">
    <location>
        <begin position="170"/>
        <end position="194"/>
    </location>
</feature>
<feature type="transmembrane region" description="Helical; Name=5" evidence="1">
    <location>
        <begin position="195"/>
        <end position="215"/>
    </location>
</feature>
<feature type="topological domain" description="Cytoplasmic" evidence="1">
    <location>
        <begin position="216"/>
        <end position="258"/>
    </location>
</feature>
<feature type="transmembrane region" description="Helical; Name=6" evidence="1">
    <location>
        <begin position="259"/>
        <end position="279"/>
    </location>
</feature>
<feature type="topological domain" description="Extracellular" evidence="1">
    <location>
        <begin position="280"/>
        <end position="282"/>
    </location>
</feature>
<feature type="transmembrane region" description="Helical; Name=7" evidence="1">
    <location>
        <begin position="283"/>
        <end position="303"/>
    </location>
</feature>
<feature type="topological domain" description="Cytoplasmic" evidence="1">
    <location>
        <begin position="304"/>
        <end position="511"/>
    </location>
</feature>
<feature type="region of interest" description="Disordered" evidence="3">
    <location>
        <begin position="1"/>
        <end position="20"/>
    </location>
</feature>
<feature type="region of interest" description="Disordered" evidence="3">
    <location>
        <begin position="328"/>
        <end position="349"/>
    </location>
</feature>
<feature type="region of interest" description="Disordered" evidence="3">
    <location>
        <begin position="361"/>
        <end position="386"/>
    </location>
</feature>
<feature type="region of interest" description="Disordered" evidence="3">
    <location>
        <begin position="407"/>
        <end position="511"/>
    </location>
</feature>
<feature type="compositionally biased region" description="Polar residues" evidence="3">
    <location>
        <begin position="335"/>
        <end position="345"/>
    </location>
</feature>
<feature type="compositionally biased region" description="Polar residues" evidence="3">
    <location>
        <begin position="369"/>
        <end position="386"/>
    </location>
</feature>
<feature type="compositionally biased region" description="Low complexity" evidence="3">
    <location>
        <begin position="419"/>
        <end position="433"/>
    </location>
</feature>
<feature type="compositionally biased region" description="Polar residues" evidence="3">
    <location>
        <begin position="435"/>
        <end position="453"/>
    </location>
</feature>
<feature type="compositionally biased region" description="Polar residues" evidence="3">
    <location>
        <begin position="462"/>
        <end position="473"/>
    </location>
</feature>
<feature type="disulfide bond" evidence="2">
    <location>
        <begin position="104"/>
        <end position="182"/>
    </location>
</feature>